<evidence type="ECO:0000250" key="1">
    <source>
        <dbReference type="UniProtKB" id="B9EJA2"/>
    </source>
</evidence>
<evidence type="ECO:0000255" key="2"/>
<evidence type="ECO:0000256" key="3">
    <source>
        <dbReference type="SAM" id="MobiDB-lite"/>
    </source>
</evidence>
<evidence type="ECO:0000269" key="4">
    <source>
    </source>
</evidence>
<evidence type="ECO:0000269" key="5">
    <source>
    </source>
</evidence>
<evidence type="ECO:0000303" key="6">
    <source>
    </source>
</evidence>
<evidence type="ECO:0000305" key="7"/>
<evidence type="ECO:0007744" key="8">
    <source>
    </source>
</evidence>
<keyword id="KW-0025">Alternative splicing</keyword>
<keyword id="KW-0040">ANK repeat</keyword>
<keyword id="KW-0966">Cell projection</keyword>
<keyword id="KW-0175">Coiled coil</keyword>
<keyword id="KW-0963">Cytoplasm</keyword>
<keyword id="KW-0488">Methylation</keyword>
<keyword id="KW-0597">Phosphoprotein</keyword>
<keyword id="KW-1185">Reference proteome</keyword>
<keyword id="KW-0677">Repeat</keyword>
<keyword id="KW-0770">Synapse</keyword>
<proteinExistence type="evidence at protein level"/>
<dbReference type="EMBL" id="AF053768">
    <property type="protein sequence ID" value="AAC35911.1"/>
    <property type="molecule type" value="mRNA"/>
</dbReference>
<dbReference type="EMBL" id="DP000027">
    <property type="protein sequence ID" value="AAR16316.1"/>
    <property type="molecule type" value="Genomic_DNA"/>
</dbReference>
<dbReference type="EMBL" id="AC087251">
    <property type="status" value="NOT_ANNOTATED_CDS"/>
    <property type="molecule type" value="Genomic_DNA"/>
</dbReference>
<dbReference type="EMBL" id="AC111378">
    <property type="status" value="NOT_ANNOTATED_CDS"/>
    <property type="molecule type" value="Genomic_DNA"/>
</dbReference>
<dbReference type="EMBL" id="AC119088">
    <property type="status" value="NOT_ANNOTATED_CDS"/>
    <property type="molecule type" value="Genomic_DNA"/>
</dbReference>
<dbReference type="EMBL" id="CH473959">
    <property type="protein sequence ID" value="EDM15128.1"/>
    <property type="molecule type" value="Genomic_DNA"/>
</dbReference>
<dbReference type="RefSeq" id="NP_001107873.1">
    <molecule id="Q2IBD4-1"/>
    <property type="nucleotide sequence ID" value="NM_001114401.1"/>
</dbReference>
<dbReference type="SMR" id="Q2IBD4"/>
<dbReference type="BioGRID" id="251850">
    <property type="interactions" value="1"/>
</dbReference>
<dbReference type="FunCoup" id="Q2IBD4">
    <property type="interactions" value="2432"/>
</dbReference>
<dbReference type="IntAct" id="Q2IBD4">
    <property type="interactions" value="1"/>
</dbReference>
<dbReference type="MINT" id="Q2IBD4"/>
<dbReference type="STRING" id="10116.ENSRNOP00000072761"/>
<dbReference type="CarbonylDB" id="Q2IBD4"/>
<dbReference type="GlyGen" id="Q2IBD4">
    <property type="glycosylation" value="1 site"/>
</dbReference>
<dbReference type="iPTMnet" id="Q2IBD4"/>
<dbReference type="PhosphoSitePlus" id="Q2IBD4"/>
<dbReference type="PaxDb" id="10116-ENSRNOP00000011135"/>
<dbReference type="Ensembl" id="ENSRNOT00000087167.2">
    <molecule id="Q2IBD4-1"/>
    <property type="protein sequence ID" value="ENSRNOP00000072761.1"/>
    <property type="gene ID" value="ENSRNOG00000061845.2"/>
</dbReference>
<dbReference type="GeneID" id="282587"/>
<dbReference type="KEGG" id="rno:282587"/>
<dbReference type="UCSC" id="RGD:628691">
    <molecule id="Q2IBD4-1"/>
    <property type="organism name" value="rat"/>
</dbReference>
<dbReference type="AGR" id="RGD:628691"/>
<dbReference type="CTD" id="83992"/>
<dbReference type="RGD" id="628691">
    <property type="gene designation" value="Cttnbp2"/>
</dbReference>
<dbReference type="eggNOG" id="ENOG502QWG2">
    <property type="taxonomic scope" value="Eukaryota"/>
</dbReference>
<dbReference type="GeneTree" id="ENSGT00940000158293"/>
<dbReference type="HOGENOM" id="CLU_004926_0_0_1"/>
<dbReference type="InParanoid" id="Q2IBD4"/>
<dbReference type="OMA" id="MCPVEAL"/>
<dbReference type="PhylomeDB" id="Q2IBD4"/>
<dbReference type="TreeFam" id="TF325130"/>
<dbReference type="PRO" id="PR:Q2IBD4"/>
<dbReference type="Proteomes" id="UP000002494">
    <property type="component" value="Chromosome 4"/>
</dbReference>
<dbReference type="Proteomes" id="UP000234681">
    <property type="component" value="Chromosome 4"/>
</dbReference>
<dbReference type="Bgee" id="ENSRNOG00000061845">
    <property type="expression patterns" value="Expressed in frontal cortex and 18 other cell types or tissues"/>
</dbReference>
<dbReference type="GO" id="GO:0005938">
    <property type="term" value="C:cell cortex"/>
    <property type="evidence" value="ECO:0007669"/>
    <property type="project" value="UniProtKB-SubCell"/>
</dbReference>
<dbReference type="GO" id="GO:0043197">
    <property type="term" value="C:dendritic spine"/>
    <property type="evidence" value="ECO:0000250"/>
    <property type="project" value="UniProtKB"/>
</dbReference>
<dbReference type="GO" id="GO:0090443">
    <property type="term" value="C:FAR/SIN/STRIPAK complex"/>
    <property type="evidence" value="ECO:0000250"/>
    <property type="project" value="UniProtKB"/>
</dbReference>
<dbReference type="GO" id="GO:0098978">
    <property type="term" value="C:glutamatergic synapse"/>
    <property type="evidence" value="ECO:0000314"/>
    <property type="project" value="SynGO"/>
</dbReference>
<dbReference type="GO" id="GO:0098871">
    <property type="term" value="C:postsynaptic actin cytoskeleton"/>
    <property type="evidence" value="ECO:0000266"/>
    <property type="project" value="RGD"/>
</dbReference>
<dbReference type="GO" id="GO:0008021">
    <property type="term" value="C:synaptic vesicle"/>
    <property type="evidence" value="ECO:0000314"/>
    <property type="project" value="RGD"/>
</dbReference>
<dbReference type="GO" id="GO:0017124">
    <property type="term" value="F:SH3 domain binding"/>
    <property type="evidence" value="ECO:0000353"/>
    <property type="project" value="RGD"/>
</dbReference>
<dbReference type="GO" id="GO:1905274">
    <property type="term" value="P:regulation of modification of postsynaptic actin cytoskeleton"/>
    <property type="evidence" value="ECO:0000314"/>
    <property type="project" value="SynGO"/>
</dbReference>
<dbReference type="GO" id="GO:0050807">
    <property type="term" value="P:regulation of synapse organization"/>
    <property type="evidence" value="ECO:0000314"/>
    <property type="project" value="SynGO"/>
</dbReference>
<dbReference type="CDD" id="cd14686">
    <property type="entry name" value="bZIP"/>
    <property type="match status" value="1"/>
</dbReference>
<dbReference type="Gene3D" id="1.25.40.20">
    <property type="entry name" value="Ankyrin repeat-containing domain"/>
    <property type="match status" value="1"/>
</dbReference>
<dbReference type="InterPro" id="IPR002110">
    <property type="entry name" value="Ankyrin_rpt"/>
</dbReference>
<dbReference type="InterPro" id="IPR036770">
    <property type="entry name" value="Ankyrin_rpt-contain_sf"/>
</dbReference>
<dbReference type="InterPro" id="IPR019131">
    <property type="entry name" value="Cortactin-binding_p2_N"/>
</dbReference>
<dbReference type="InterPro" id="IPR050889">
    <property type="entry name" value="Dendritic_Spine_Reg/Scaffold"/>
</dbReference>
<dbReference type="PANTHER" id="PTHR24166:SF27">
    <property type="entry name" value="CORTACTIN-BINDING PROTEIN 2"/>
    <property type="match status" value="1"/>
</dbReference>
<dbReference type="PANTHER" id="PTHR24166">
    <property type="entry name" value="ROLLING PEBBLES, ISOFORM B"/>
    <property type="match status" value="1"/>
</dbReference>
<dbReference type="Pfam" id="PF25408">
    <property type="entry name" value="AAA_lid_NAV1"/>
    <property type="match status" value="1"/>
</dbReference>
<dbReference type="Pfam" id="PF00023">
    <property type="entry name" value="Ank"/>
    <property type="match status" value="2"/>
</dbReference>
<dbReference type="Pfam" id="PF12796">
    <property type="entry name" value="Ank_2"/>
    <property type="match status" value="1"/>
</dbReference>
<dbReference type="Pfam" id="PF09727">
    <property type="entry name" value="CortBP2"/>
    <property type="match status" value="1"/>
</dbReference>
<dbReference type="SMART" id="SM00248">
    <property type="entry name" value="ANK"/>
    <property type="match status" value="6"/>
</dbReference>
<dbReference type="SUPFAM" id="SSF48403">
    <property type="entry name" value="Ankyrin repeat"/>
    <property type="match status" value="1"/>
</dbReference>
<dbReference type="PROSITE" id="PS50297">
    <property type="entry name" value="ANK_REP_REGION"/>
    <property type="match status" value="1"/>
</dbReference>
<dbReference type="PROSITE" id="PS50088">
    <property type="entry name" value="ANK_REPEAT"/>
    <property type="match status" value="4"/>
</dbReference>
<accession>Q2IBD4</accession>
<accession>O88864</accession>
<reference key="1">
    <citation type="journal article" date="1998" name="Genes Cells">
        <title>Isolation and characterization of cortactin isoforms and a novel cortactin-binding protein, CBP90.</title>
        <authorList>
            <person name="Ohoka Y."/>
            <person name="Takai Y."/>
        </authorList>
    </citation>
    <scope>NUCLEOTIDE SEQUENCE [MRNA] (ISOFORM 2)</scope>
</reference>
<reference key="2">
    <citation type="journal article" date="2003" name="Nature">
        <title>Comparative analyses of multi-species sequences from targeted genomic regions.</title>
        <authorList>
            <person name="Thomas J.W."/>
            <person name="Touchman J.W."/>
            <person name="Blakesley R.W."/>
            <person name="Bouffard G.G."/>
            <person name="Beckstrom-Sternberg S.M."/>
            <person name="Margulies E.H."/>
            <person name="Blanchette M."/>
            <person name="Siepel A.C."/>
            <person name="Thomas P.J."/>
            <person name="McDowell J.C."/>
            <person name="Maskeri B."/>
            <person name="Hansen N.F."/>
            <person name="Schwartz M.S."/>
            <person name="Weber R.J."/>
            <person name="Kent W.J."/>
            <person name="Karolchik D."/>
            <person name="Bruen T.C."/>
            <person name="Bevan R."/>
            <person name="Cutler D.J."/>
            <person name="Schwartz S."/>
            <person name="Elnitski L."/>
            <person name="Idol J.R."/>
            <person name="Prasad A.B."/>
            <person name="Lee-Lin S.-Q."/>
            <person name="Maduro V.V.B."/>
            <person name="Summers T.J."/>
            <person name="Portnoy M.E."/>
            <person name="Dietrich N.L."/>
            <person name="Akhter N."/>
            <person name="Ayele K."/>
            <person name="Benjamin B."/>
            <person name="Cariaga K."/>
            <person name="Brinkley C.P."/>
            <person name="Brooks S.Y."/>
            <person name="Granite S."/>
            <person name="Guan X."/>
            <person name="Gupta J."/>
            <person name="Haghighi P."/>
            <person name="Ho S.-L."/>
            <person name="Huang M.C."/>
            <person name="Karlins E."/>
            <person name="Laric P.L."/>
            <person name="Legaspi R."/>
            <person name="Lim M.J."/>
            <person name="Maduro Q.L."/>
            <person name="Masiello C.A."/>
            <person name="Mastrian S.D."/>
            <person name="McCloskey J.C."/>
            <person name="Pearson R."/>
            <person name="Stantripop S."/>
            <person name="Tiongson E.E."/>
            <person name="Tran J.T."/>
            <person name="Tsurgeon C."/>
            <person name="Vogt J.L."/>
            <person name="Walker M.A."/>
            <person name="Wetherby K.D."/>
            <person name="Wiggins L.S."/>
            <person name="Young A.C."/>
            <person name="Zhang L.-H."/>
            <person name="Osoegawa K."/>
            <person name="Zhu B."/>
            <person name="Zhao B."/>
            <person name="Shu C.L."/>
            <person name="De Jong P.J."/>
            <person name="Lawrence C.E."/>
            <person name="Smit A.F."/>
            <person name="Chakravarti A."/>
            <person name="Haussler D."/>
            <person name="Green P."/>
            <person name="Miller W."/>
            <person name="Green E.D."/>
        </authorList>
    </citation>
    <scope>NUCLEOTIDE SEQUENCE [LARGE SCALE GENOMIC DNA]</scope>
    <source>
        <strain>Brown Norway</strain>
    </source>
</reference>
<reference key="3">
    <citation type="journal article" date="2004" name="Nature">
        <title>Genome sequence of the Brown Norway rat yields insights into mammalian evolution.</title>
        <authorList>
            <person name="Gibbs R.A."/>
            <person name="Weinstock G.M."/>
            <person name="Metzker M.L."/>
            <person name="Muzny D.M."/>
            <person name="Sodergren E.J."/>
            <person name="Scherer S."/>
            <person name="Scott G."/>
            <person name="Steffen D."/>
            <person name="Worley K.C."/>
            <person name="Burch P.E."/>
            <person name="Okwuonu G."/>
            <person name="Hines S."/>
            <person name="Lewis L."/>
            <person name="Deramo C."/>
            <person name="Delgado O."/>
            <person name="Dugan-Rocha S."/>
            <person name="Miner G."/>
            <person name="Morgan M."/>
            <person name="Hawes A."/>
            <person name="Gill R."/>
            <person name="Holt R.A."/>
            <person name="Adams M.D."/>
            <person name="Amanatides P.G."/>
            <person name="Baden-Tillson H."/>
            <person name="Barnstead M."/>
            <person name="Chin S."/>
            <person name="Evans C.A."/>
            <person name="Ferriera S."/>
            <person name="Fosler C."/>
            <person name="Glodek A."/>
            <person name="Gu Z."/>
            <person name="Jennings D."/>
            <person name="Kraft C.L."/>
            <person name="Nguyen T."/>
            <person name="Pfannkoch C.M."/>
            <person name="Sitter C."/>
            <person name="Sutton G.G."/>
            <person name="Venter J.C."/>
            <person name="Woodage T."/>
            <person name="Smith D."/>
            <person name="Lee H.-M."/>
            <person name="Gustafson E."/>
            <person name="Cahill P."/>
            <person name="Kana A."/>
            <person name="Doucette-Stamm L."/>
            <person name="Weinstock K."/>
            <person name="Fechtel K."/>
            <person name="Weiss R.B."/>
            <person name="Dunn D.M."/>
            <person name="Green E.D."/>
            <person name="Blakesley R.W."/>
            <person name="Bouffard G.G."/>
            <person name="De Jong P.J."/>
            <person name="Osoegawa K."/>
            <person name="Zhu B."/>
            <person name="Marra M."/>
            <person name="Schein J."/>
            <person name="Bosdet I."/>
            <person name="Fjell C."/>
            <person name="Jones S."/>
            <person name="Krzywinski M."/>
            <person name="Mathewson C."/>
            <person name="Siddiqui A."/>
            <person name="Wye N."/>
            <person name="McPherson J."/>
            <person name="Zhao S."/>
            <person name="Fraser C.M."/>
            <person name="Shetty J."/>
            <person name="Shatsman S."/>
            <person name="Geer K."/>
            <person name="Chen Y."/>
            <person name="Abramzon S."/>
            <person name="Nierman W.C."/>
            <person name="Havlak P.H."/>
            <person name="Chen R."/>
            <person name="Durbin K.J."/>
            <person name="Egan A."/>
            <person name="Ren Y."/>
            <person name="Song X.-Z."/>
            <person name="Li B."/>
            <person name="Liu Y."/>
            <person name="Qin X."/>
            <person name="Cawley S."/>
            <person name="Cooney A.J."/>
            <person name="D'Souza L.M."/>
            <person name="Martin K."/>
            <person name="Wu J.Q."/>
            <person name="Gonzalez-Garay M.L."/>
            <person name="Jackson A.R."/>
            <person name="Kalafus K.J."/>
            <person name="McLeod M.P."/>
            <person name="Milosavljevic A."/>
            <person name="Virk D."/>
            <person name="Volkov A."/>
            <person name="Wheeler D.A."/>
            <person name="Zhang Z."/>
            <person name="Bailey J.A."/>
            <person name="Eichler E.E."/>
            <person name="Tuzun E."/>
            <person name="Birney E."/>
            <person name="Mongin E."/>
            <person name="Ureta-Vidal A."/>
            <person name="Woodwark C."/>
            <person name="Zdobnov E."/>
            <person name="Bork P."/>
            <person name="Suyama M."/>
            <person name="Torrents D."/>
            <person name="Alexandersson M."/>
            <person name="Trask B.J."/>
            <person name="Young J.M."/>
            <person name="Huang H."/>
            <person name="Wang H."/>
            <person name="Xing H."/>
            <person name="Daniels S."/>
            <person name="Gietzen D."/>
            <person name="Schmidt J."/>
            <person name="Stevens K."/>
            <person name="Vitt U."/>
            <person name="Wingrove J."/>
            <person name="Camara F."/>
            <person name="Mar Alba M."/>
            <person name="Abril J.F."/>
            <person name="Guigo R."/>
            <person name="Smit A."/>
            <person name="Dubchak I."/>
            <person name="Rubin E.M."/>
            <person name="Couronne O."/>
            <person name="Poliakov A."/>
            <person name="Huebner N."/>
            <person name="Ganten D."/>
            <person name="Goesele C."/>
            <person name="Hummel O."/>
            <person name="Kreitler T."/>
            <person name="Lee Y.-A."/>
            <person name="Monti J."/>
            <person name="Schulz H."/>
            <person name="Zimdahl H."/>
            <person name="Himmelbauer H."/>
            <person name="Lehrach H."/>
            <person name="Jacob H.J."/>
            <person name="Bromberg S."/>
            <person name="Gullings-Handley J."/>
            <person name="Jensen-Seaman M.I."/>
            <person name="Kwitek A.E."/>
            <person name="Lazar J."/>
            <person name="Pasko D."/>
            <person name="Tonellato P.J."/>
            <person name="Twigger S."/>
            <person name="Ponting C.P."/>
            <person name="Duarte J.M."/>
            <person name="Rice S."/>
            <person name="Goodstadt L."/>
            <person name="Beatson S.A."/>
            <person name="Emes R.D."/>
            <person name="Winter E.E."/>
            <person name="Webber C."/>
            <person name="Brandt P."/>
            <person name="Nyakatura G."/>
            <person name="Adetobi M."/>
            <person name="Chiaromonte F."/>
            <person name="Elnitski L."/>
            <person name="Eswara P."/>
            <person name="Hardison R.C."/>
            <person name="Hou M."/>
            <person name="Kolbe D."/>
            <person name="Makova K."/>
            <person name="Miller W."/>
            <person name="Nekrutenko A."/>
            <person name="Riemer C."/>
            <person name="Schwartz S."/>
            <person name="Taylor J."/>
            <person name="Yang S."/>
            <person name="Zhang Y."/>
            <person name="Lindpaintner K."/>
            <person name="Andrews T.D."/>
            <person name="Caccamo M."/>
            <person name="Clamp M."/>
            <person name="Clarke L."/>
            <person name="Curwen V."/>
            <person name="Durbin R.M."/>
            <person name="Eyras E."/>
            <person name="Searle S.M."/>
            <person name="Cooper G.M."/>
            <person name="Batzoglou S."/>
            <person name="Brudno M."/>
            <person name="Sidow A."/>
            <person name="Stone E.A."/>
            <person name="Payseur B.A."/>
            <person name="Bourque G."/>
            <person name="Lopez-Otin C."/>
            <person name="Puente X.S."/>
            <person name="Chakrabarti K."/>
            <person name="Chatterji S."/>
            <person name="Dewey C."/>
            <person name="Pachter L."/>
            <person name="Bray N."/>
            <person name="Yap V.B."/>
            <person name="Caspi A."/>
            <person name="Tesler G."/>
            <person name="Pevzner P.A."/>
            <person name="Haussler D."/>
            <person name="Roskin K.M."/>
            <person name="Baertsch R."/>
            <person name="Clawson H."/>
            <person name="Furey T.S."/>
            <person name="Hinrichs A.S."/>
            <person name="Karolchik D."/>
            <person name="Kent W.J."/>
            <person name="Rosenbloom K.R."/>
            <person name="Trumbower H."/>
            <person name="Weirauch M."/>
            <person name="Cooper D.N."/>
            <person name="Stenson P.D."/>
            <person name="Ma B."/>
            <person name="Brent M."/>
            <person name="Arumugam M."/>
            <person name="Shteynberg D."/>
            <person name="Copley R.R."/>
            <person name="Taylor M.S."/>
            <person name="Riethman H."/>
            <person name="Mudunuri U."/>
            <person name="Peterson J."/>
            <person name="Guyer M."/>
            <person name="Felsenfeld A."/>
            <person name="Old S."/>
            <person name="Mockrin S."/>
            <person name="Collins F.S."/>
        </authorList>
    </citation>
    <scope>NUCLEOTIDE SEQUENCE [LARGE SCALE GENOMIC DNA]</scope>
    <source>
        <strain>Brown Norway</strain>
    </source>
</reference>
<reference key="4">
    <citation type="submission" date="2005-07" db="EMBL/GenBank/DDBJ databases">
        <authorList>
            <person name="Mural R.J."/>
            <person name="Adams M.D."/>
            <person name="Myers E.W."/>
            <person name="Smith H.O."/>
            <person name="Venter J.C."/>
        </authorList>
    </citation>
    <scope>NUCLEOTIDE SEQUENCE [LARGE SCALE GENOMIC DNA]</scope>
</reference>
<reference key="5">
    <citation type="journal article" date="2012" name="J. Neurosci.">
        <title>Cortactin-binding protein 2 modulates the mobility of cortactin and regulates dendritic spine formation and maintenance.</title>
        <authorList>
            <person name="Chen Y.K."/>
            <person name="Hsueh Y.P."/>
        </authorList>
    </citation>
    <scope>FUNCTION</scope>
    <scope>INTERACTION WITH CTTN</scope>
    <scope>SUBCELLULAR LOCATION</scope>
</reference>
<reference key="6">
    <citation type="journal article" date="2012" name="Mol. Biol. Cell">
        <title>CTTNBP2, but not CTTNBP2NL, regulates dendritic spinogenesis and synaptic distribution of the striatin-PP2A complex.</title>
        <authorList>
            <person name="Chen Y.K."/>
            <person name="Chen C.Y."/>
            <person name="Hu H.T."/>
            <person name="Hsueh Y.P."/>
        </authorList>
    </citation>
    <scope>INTERACTION WITH STRN; STRN4 AND MOB4</scope>
    <scope>FUNCTION</scope>
</reference>
<reference key="7">
    <citation type="journal article" date="2012" name="Nat. Commun.">
        <title>Quantitative maps of protein phosphorylation sites across 14 different rat organs and tissues.</title>
        <authorList>
            <person name="Lundby A."/>
            <person name="Secher A."/>
            <person name="Lage K."/>
            <person name="Nordsborg N.B."/>
            <person name="Dmytriyev A."/>
            <person name="Lundby C."/>
            <person name="Olsen J.V."/>
        </authorList>
    </citation>
    <scope>PHOSPHORYLATION [LARGE SCALE ANALYSIS] AT SER-1510</scope>
    <scope>IDENTIFICATION BY MASS SPECTROMETRY [LARGE SCALE ANALYSIS]</scope>
</reference>
<protein>
    <recommendedName>
        <fullName>Cortactin-binding protein 2</fullName>
        <shortName>CortBP2</shortName>
    </recommendedName>
</protein>
<organism>
    <name type="scientific">Rattus norvegicus</name>
    <name type="common">Rat</name>
    <dbReference type="NCBI Taxonomy" id="10116"/>
    <lineage>
        <taxon>Eukaryota</taxon>
        <taxon>Metazoa</taxon>
        <taxon>Chordata</taxon>
        <taxon>Craniata</taxon>
        <taxon>Vertebrata</taxon>
        <taxon>Euteleostomi</taxon>
        <taxon>Mammalia</taxon>
        <taxon>Eutheria</taxon>
        <taxon>Euarchontoglires</taxon>
        <taxon>Glires</taxon>
        <taxon>Rodentia</taxon>
        <taxon>Myomorpha</taxon>
        <taxon>Muroidea</taxon>
        <taxon>Muridae</taxon>
        <taxon>Murinae</taxon>
        <taxon>Rattus</taxon>
    </lineage>
</organism>
<sequence>MATDSASCEPDLSRAPGDAEGATAEAAKKEFDVDTLSKSELRMLLSVMEGELEARDLVIEALRARRKEVFIQERYGRFNLNDPFLALQRDYEAGAGDKEKPVCTNPLSILEAVMAHCRKMQERMSAQLAAAESRQKKLEMEKLQLQALEQEHKKLAAHLEEERGKNKHVVLMLVKECKQLSGKVVEEAQKLEEVMVKLEEEKKKTSELEDQLSAEKQRSAGMEAQLEKQLFEFDTEREQLRAKLTREEAHTTDLKEEIDKMKKMMEQMKKGNDGKPGLSLPRKTKDKRLASISVATEGPVTRSVACQTDVVTESTDPVKKLPLSVPIKPSTGSPLVSTNTKGNVGPSALLIRPGIDRQASHSDLGPSPPTALPSSASRIEENGPSAGNAPDLSNSTPSTPSGTAPAAAQTLGAAPQNHSQAPPVHSLHSPCANTHPGLNPRIQAARFRFQGNANDPDQNGNNTQSPPSRDVSPTSRDNLVAKQLARNTVTQALSRFTSPQAGASSRLGASPGGDAGTCPPVGRTGLKTPGAARVDRGNPPPIPPKKPGLSQTPSPPHPQLRASNAGAKVDNKIVASPPSTLPQGTKVVNEENVPKSSSPQLPPKPSIDLTVASAGCPVSALATSQVGAWPAETPGLNQPACTDSSLVIPTTVAFRSSINPVSASSRSPGASDSLLVTASGWSPSLTPLLMSGGPAPLAGRPTLLQQAAAQGNVTLLSMLLNEEGLDINYCCEDSHSALYSAAKNGHTDCVRLLLNAEARVDAADKNGFTPLCVAAAQGHFECIELLTAYNANINHSAAGGQTPLYLACKTGNKECIKLLLEAGTDRSIKTRDGWTPIHAAVDTGNVDSLKLLMYHRVPAPGNSLSAEEPKSGLFSLNGGESPPGSSKPVVPADLINHADKEGWTAAHIAASKGFKNCLEILCRHGGLEPERRDKCNRTVHDVATDDCKHLLENLNALKIPLRISVGEIQPSNDGSDDFECEHTICTLNIRKQTSWEDFSKAVSQALTNHFQAISSDGCWGLEDGTLNNTTDSCIGLGTSSIQSIMLGSIPWSTGQSFSQSPWDFMKKKKVEQVTVLLSGPQEGCLSSVTYTSMIPLQMLQNYLRLVEQYHNVIFHGPEGSLQDYIANQLALCMKHRQMAAGFPCEIVRAEVDSGFSKEQLVDVFISNACLIPVKQFPVKKKIIVILENLEKSSLSELLGDFLAPLENRSTESPCTFQKGNGTSECYYFHENCFLLGTLAKACLQGSDLLVQQHFRWVQLRWDCEPSQGLLQRFLRRKAVSKFRGQLPAPCDPVCKIVDWVISVWRQLNSCLARLGTPEALLGPKYFLSCPVVPGHAQATVKWMSKLWNAIIAPRVQEAILSRAAMNKQPGARQTASKKHPSQGQQAVVRAALSILLNKAILHGCPLPRTELDQQIADFKGGSFPLSIVSSYSKKKGESAAWRKVNTSPRKKPGHFSSPMWNKPDLKHEGMRNKSVPHLNINRSSSLSKQQSLENDLSMTLTLDHRLSLGSDDEADLVKELQSMCSSKSESDISKIADSREDLRTFDSSRTNPVTSAPVNLRMPVPQKEASPLSSHQTTECSNSKSKTELGVSRVKSFLPVPRSKVAQCSQNTKRSSSSSSNTRQLEINNNSKEENWNVDKHEHVEKRNK</sequence>
<gene>
    <name type="primary">Cttnbp2</name>
</gene>
<feature type="chain" id="PRO_0000422173" description="Cortactin-binding protein 2">
    <location>
        <begin position="1"/>
        <end position="1649"/>
    </location>
</feature>
<feature type="repeat" description="ANK 1">
    <location>
        <begin position="699"/>
        <end position="729"/>
    </location>
</feature>
<feature type="repeat" description="ANK 2">
    <location>
        <begin position="733"/>
        <end position="762"/>
    </location>
</feature>
<feature type="repeat" description="ANK 3">
    <location>
        <begin position="766"/>
        <end position="795"/>
    </location>
</feature>
<feature type="repeat" description="ANK 4">
    <location>
        <begin position="799"/>
        <end position="828"/>
    </location>
</feature>
<feature type="repeat" description="ANK 5">
    <location>
        <begin position="832"/>
        <end position="861"/>
    </location>
</feature>
<feature type="repeat" description="ANK 6">
    <location>
        <begin position="901"/>
        <end position="931"/>
    </location>
</feature>
<feature type="region of interest" description="Disordered" evidence="3">
    <location>
        <begin position="1"/>
        <end position="27"/>
    </location>
</feature>
<feature type="region of interest" description="Disordered" evidence="3">
    <location>
        <begin position="322"/>
        <end position="439"/>
    </location>
</feature>
<feature type="region of interest" description="Disordered" evidence="3">
    <location>
        <begin position="451"/>
        <end position="476"/>
    </location>
</feature>
<feature type="region of interest" description="Disordered" evidence="3">
    <location>
        <begin position="492"/>
        <end position="604"/>
    </location>
</feature>
<feature type="region of interest" description="Disordered" evidence="3">
    <location>
        <begin position="1438"/>
        <end position="1471"/>
    </location>
</feature>
<feature type="region of interest" description="Disordered" evidence="3">
    <location>
        <begin position="1527"/>
        <end position="1649"/>
    </location>
</feature>
<feature type="coiled-coil region" evidence="2">
    <location>
        <begin position="118"/>
        <end position="275"/>
    </location>
</feature>
<feature type="compositionally biased region" description="Low complexity" evidence="3">
    <location>
        <begin position="15"/>
        <end position="25"/>
    </location>
</feature>
<feature type="compositionally biased region" description="Polar residues" evidence="3">
    <location>
        <begin position="330"/>
        <end position="342"/>
    </location>
</feature>
<feature type="compositionally biased region" description="Low complexity" evidence="3">
    <location>
        <begin position="395"/>
        <end position="416"/>
    </location>
</feature>
<feature type="compositionally biased region" description="Polar residues" evidence="3">
    <location>
        <begin position="492"/>
        <end position="503"/>
    </location>
</feature>
<feature type="compositionally biased region" description="Basic and acidic residues" evidence="3">
    <location>
        <begin position="1528"/>
        <end position="1546"/>
    </location>
</feature>
<feature type="compositionally biased region" description="Polar residues" evidence="3">
    <location>
        <begin position="1547"/>
        <end position="1557"/>
    </location>
</feature>
<feature type="compositionally biased region" description="Polar residues" evidence="3">
    <location>
        <begin position="1571"/>
        <end position="1584"/>
    </location>
</feature>
<feature type="compositionally biased region" description="Polar residues" evidence="3">
    <location>
        <begin position="1621"/>
        <end position="1630"/>
    </location>
</feature>
<feature type="compositionally biased region" description="Basic and acidic residues" evidence="3">
    <location>
        <begin position="1631"/>
        <end position="1649"/>
    </location>
</feature>
<feature type="modified residue" description="Asymmetric dimethylarginine" evidence="1">
    <location>
        <position position="495"/>
    </location>
</feature>
<feature type="modified residue" description="Phosphoserine" evidence="8">
    <location>
        <position position="1510"/>
    </location>
</feature>
<feature type="splice variant" id="VSP_046479" description="In isoform 2." evidence="6">
    <original>VGAWP</original>
    <variation>AGHPP</variation>
    <location>
        <begin position="626"/>
        <end position="630"/>
    </location>
</feature>
<feature type="splice variant" id="VSP_046480" description="In isoform 2." evidence="6">
    <location>
        <begin position="631"/>
        <end position="1649"/>
    </location>
</feature>
<feature type="sequence conflict" description="In Ref. 1; AAC35911." evidence="7" ref="1">
    <original>R</original>
    <variation>K</variation>
    <location>
        <position position="163"/>
    </location>
</feature>
<feature type="sequence conflict" description="In Ref. 1; AAC35911." evidence="7" ref="1">
    <original>K</original>
    <variation>Q</variation>
    <location>
        <position position="260"/>
    </location>
</feature>
<feature type="sequence conflict" description="In Ref. 1; AAC35911." evidence="7" ref="1">
    <original>L</original>
    <variation>F</variation>
    <location>
        <position position="280"/>
    </location>
</feature>
<name>CTTB2_RAT</name>
<comment type="function">
    <text evidence="4 5">Regulates the dendritic spine distribution of CTTN/cortactin in hippocampal neurons, and thus controls dendritic spinogenesis and dendritic spine maintenance (PubMed:22262902). Associates with the striatin-interacting phosphatase and kinase (STRIPAK) core complex to regulate dendritic spine distribution of the STRIPAK complex in hippocampal neurons (PubMed:23015759).</text>
</comment>
<comment type="subunit">
    <text evidence="4 5">Interacts with CTTN/cortactin SH3 domain (PubMed:22262902). Interacts with STRN, STRN4/zinedin and MOB4/phocein; this interactions mediate the association with the STRIPAK core complex and may regulate dendritic spine distribution of the STRIPAK complex in hippocampal neurons. Activation of glutamate receptors weakens the interaction with STRN and STRN4 (PubMed:23015759).</text>
</comment>
<comment type="subcellular location">
    <subcellularLocation>
        <location evidence="1">Cytoplasm</location>
        <location evidence="1">Cell cortex</location>
    </subcellularLocation>
    <subcellularLocation>
        <location evidence="4">Cell projection</location>
        <location evidence="4">Dendritic spine</location>
    </subcellularLocation>
    <text evidence="4">Remains associated with dendritic spines even after glutamate stimulation.</text>
</comment>
<comment type="alternative products">
    <event type="alternative splicing"/>
    <isoform>
        <id>Q2IBD4-1</id>
        <name>1</name>
        <name>CTTNBP2-L</name>
        <sequence type="displayed"/>
    </isoform>
    <isoform>
        <id>Q2IBD4-2</id>
        <name>2</name>
        <name>CTTNBP2-S</name>
        <sequence type="described" ref="VSP_046479 VSP_046480"/>
    </isoform>
</comment>